<evidence type="ECO:0000255" key="1">
    <source>
        <dbReference type="HAMAP-Rule" id="MF_00653"/>
    </source>
</evidence>
<name>PQQB_RHOPT</name>
<protein>
    <recommendedName>
        <fullName evidence="1">Coenzyme PQQ synthesis protein B</fullName>
    </recommendedName>
    <alternativeName>
        <fullName evidence="1">Pyrroloquinoline quinone biosynthesis protein B</fullName>
    </alternativeName>
</protein>
<accession>B3QBS9</accession>
<sequence>MLRVIVLGAAAGGGVPQWNCGCPVCRAAFDDPRLARTQASLAISADNAHWFLINASPDLRQQIIATPQLHPRAGALRHSPIAGVILTNGEVDAVAGLLSMREGAPFSIYAHDKVLAILRANSIFNVLNESIVARRPVATDQPFEPLLPDGTPSGLEITAFEVPGKGAWYLEGRTHPGGDSQSGDTLGLTITDKSTGQSLHVLTACARVTDDLKARLAGAPLLLFDGTVWRDDELITAGLGTKTGQAMGHIAMAGDDGAIAALADLDIGQKLFVHINNSNPALLAHSAERGQLETAGWQIPADGTEVTL</sequence>
<feature type="chain" id="PRO_1000131169" description="Coenzyme PQQ synthesis protein B">
    <location>
        <begin position="1"/>
        <end position="308"/>
    </location>
</feature>
<dbReference type="EMBL" id="CP001096">
    <property type="protein sequence ID" value="ACF00679.1"/>
    <property type="molecule type" value="Genomic_DNA"/>
</dbReference>
<dbReference type="RefSeq" id="WP_012495480.1">
    <property type="nucleotide sequence ID" value="NC_011004.1"/>
</dbReference>
<dbReference type="SMR" id="B3QBS9"/>
<dbReference type="KEGG" id="rpt:Rpal_2158"/>
<dbReference type="HOGENOM" id="CLU_061120_0_0_5"/>
<dbReference type="OrthoDB" id="9778305at2"/>
<dbReference type="UniPathway" id="UPA00539"/>
<dbReference type="Proteomes" id="UP000001725">
    <property type="component" value="Chromosome"/>
</dbReference>
<dbReference type="GO" id="GO:0018189">
    <property type="term" value="P:pyrroloquinoline quinone biosynthetic process"/>
    <property type="evidence" value="ECO:0007669"/>
    <property type="project" value="UniProtKB-UniRule"/>
</dbReference>
<dbReference type="Gene3D" id="3.60.15.10">
    <property type="entry name" value="Ribonuclease Z/Hydroxyacylglutathione hydrolase-like"/>
    <property type="match status" value="1"/>
</dbReference>
<dbReference type="HAMAP" id="MF_00653">
    <property type="entry name" value="PQQ_syn_PqqB"/>
    <property type="match status" value="1"/>
</dbReference>
<dbReference type="InterPro" id="IPR001279">
    <property type="entry name" value="Metallo-B-lactamas"/>
</dbReference>
<dbReference type="InterPro" id="IPR011842">
    <property type="entry name" value="PQQ_synth_PqqB"/>
</dbReference>
<dbReference type="InterPro" id="IPR036866">
    <property type="entry name" value="RibonucZ/Hydroxyglut_hydro"/>
</dbReference>
<dbReference type="NCBIfam" id="TIGR02108">
    <property type="entry name" value="PQQ_syn_pqqB"/>
    <property type="match status" value="1"/>
</dbReference>
<dbReference type="PANTHER" id="PTHR42663:SF7">
    <property type="entry name" value="COENZYME PQQ SYNTHESIS PROTEIN B"/>
    <property type="match status" value="1"/>
</dbReference>
<dbReference type="PANTHER" id="PTHR42663">
    <property type="entry name" value="HYDROLASE C777.06C-RELATED-RELATED"/>
    <property type="match status" value="1"/>
</dbReference>
<dbReference type="Pfam" id="PF12706">
    <property type="entry name" value="Lactamase_B_2"/>
    <property type="match status" value="1"/>
</dbReference>
<dbReference type="SUPFAM" id="SSF56281">
    <property type="entry name" value="Metallo-hydrolase/oxidoreductase"/>
    <property type="match status" value="1"/>
</dbReference>
<reference key="1">
    <citation type="submission" date="2008-05" db="EMBL/GenBank/DDBJ databases">
        <title>Complete sequence of Rhodopseudomonas palustris TIE-1.</title>
        <authorList>
            <consortium name="US DOE Joint Genome Institute"/>
            <person name="Lucas S."/>
            <person name="Copeland A."/>
            <person name="Lapidus A."/>
            <person name="Glavina del Rio T."/>
            <person name="Dalin E."/>
            <person name="Tice H."/>
            <person name="Pitluck S."/>
            <person name="Chain P."/>
            <person name="Malfatti S."/>
            <person name="Shin M."/>
            <person name="Vergez L."/>
            <person name="Lang D."/>
            <person name="Schmutz J."/>
            <person name="Larimer F."/>
            <person name="Land M."/>
            <person name="Hauser L."/>
            <person name="Kyrpides N."/>
            <person name="Mikhailova N."/>
            <person name="Emerson D."/>
            <person name="Newman D.K."/>
            <person name="Roden E."/>
            <person name="Richardson P."/>
        </authorList>
    </citation>
    <scope>NUCLEOTIDE SEQUENCE [LARGE SCALE GENOMIC DNA]</scope>
    <source>
        <strain>TIE-1</strain>
    </source>
</reference>
<keyword id="KW-0884">PQQ biosynthesis</keyword>
<keyword id="KW-0813">Transport</keyword>
<gene>
    <name evidence="1" type="primary">pqqB</name>
    <name type="ordered locus">Rpal_2158</name>
</gene>
<comment type="function">
    <text evidence="1">May be involved in the transport of PQQ or its precursor to the periplasm.</text>
</comment>
<comment type="pathway">
    <text evidence="1">Cofactor biosynthesis; pyrroloquinoline quinone biosynthesis.</text>
</comment>
<comment type="similarity">
    <text evidence="1">Belongs to the PqqB family.</text>
</comment>
<proteinExistence type="inferred from homology"/>
<organism>
    <name type="scientific">Rhodopseudomonas palustris (strain TIE-1)</name>
    <dbReference type="NCBI Taxonomy" id="395960"/>
    <lineage>
        <taxon>Bacteria</taxon>
        <taxon>Pseudomonadati</taxon>
        <taxon>Pseudomonadota</taxon>
        <taxon>Alphaproteobacteria</taxon>
        <taxon>Hyphomicrobiales</taxon>
        <taxon>Nitrobacteraceae</taxon>
        <taxon>Rhodopseudomonas</taxon>
    </lineage>
</organism>